<evidence type="ECO:0000250" key="1">
    <source>
        <dbReference type="UniProtKB" id="Q9H5N1"/>
    </source>
</evidence>
<evidence type="ECO:0000255" key="2"/>
<evidence type="ECO:0000256" key="3">
    <source>
        <dbReference type="SAM" id="MobiDB-lite"/>
    </source>
</evidence>
<evidence type="ECO:0000305" key="4"/>
<evidence type="ECO:0007744" key="5">
    <source>
    </source>
</evidence>
<dbReference type="EMBL" id="U34932">
    <property type="protein sequence ID" value="AAA79137.1"/>
    <property type="molecule type" value="mRNA"/>
</dbReference>
<dbReference type="RefSeq" id="NP_085074.1">
    <property type="nucleotide sequence ID" value="NM_030585.1"/>
</dbReference>
<dbReference type="SMR" id="Q62835"/>
<dbReference type="BioGRID" id="249480">
    <property type="interactions" value="2"/>
</dbReference>
<dbReference type="FunCoup" id="Q62835">
    <property type="interactions" value="288"/>
</dbReference>
<dbReference type="STRING" id="10116.ENSRNOP00000025043"/>
<dbReference type="iPTMnet" id="Q62835"/>
<dbReference type="PhosphoSitePlus" id="Q62835"/>
<dbReference type="jPOST" id="Q62835"/>
<dbReference type="PaxDb" id="10116-ENSRNOP00000025043"/>
<dbReference type="GeneID" id="80754"/>
<dbReference type="KEGG" id="rno:80754"/>
<dbReference type="AGR" id="RGD:621416"/>
<dbReference type="CTD" id="79874"/>
<dbReference type="RGD" id="621416">
    <property type="gene designation" value="Rabep2"/>
</dbReference>
<dbReference type="eggNOG" id="KOG0993">
    <property type="taxonomic scope" value="Eukaryota"/>
</dbReference>
<dbReference type="InParanoid" id="Q62835"/>
<dbReference type="OrthoDB" id="79940at2759"/>
<dbReference type="PhylomeDB" id="Q62835"/>
<dbReference type="PRO" id="PR:Q62835"/>
<dbReference type="Proteomes" id="UP000002494">
    <property type="component" value="Unplaced"/>
</dbReference>
<dbReference type="GO" id="GO:0005813">
    <property type="term" value="C:centrosome"/>
    <property type="evidence" value="ECO:0000266"/>
    <property type="project" value="RGD"/>
</dbReference>
<dbReference type="GO" id="GO:0036064">
    <property type="term" value="C:ciliary basal body"/>
    <property type="evidence" value="ECO:0000266"/>
    <property type="project" value="RGD"/>
</dbReference>
<dbReference type="GO" id="GO:0005769">
    <property type="term" value="C:early endosome"/>
    <property type="evidence" value="ECO:0007669"/>
    <property type="project" value="UniProtKB-SubCell"/>
</dbReference>
<dbReference type="GO" id="GO:0043231">
    <property type="term" value="C:intracellular membrane-bounded organelle"/>
    <property type="evidence" value="ECO:0000318"/>
    <property type="project" value="GO_Central"/>
</dbReference>
<dbReference type="GO" id="GO:0008083">
    <property type="term" value="F:growth factor activity"/>
    <property type="evidence" value="ECO:0007669"/>
    <property type="project" value="InterPro"/>
</dbReference>
<dbReference type="GO" id="GO:0005096">
    <property type="term" value="F:GTPase activator activity"/>
    <property type="evidence" value="ECO:0007669"/>
    <property type="project" value="InterPro"/>
</dbReference>
<dbReference type="GO" id="GO:0030030">
    <property type="term" value="P:cell projection organization"/>
    <property type="evidence" value="ECO:0007669"/>
    <property type="project" value="UniProtKB-KW"/>
</dbReference>
<dbReference type="GO" id="GO:0006897">
    <property type="term" value="P:endocytosis"/>
    <property type="evidence" value="ECO:0007669"/>
    <property type="project" value="UniProtKB-KW"/>
</dbReference>
<dbReference type="GO" id="GO:0015031">
    <property type="term" value="P:protein transport"/>
    <property type="evidence" value="ECO:0007669"/>
    <property type="project" value="UniProtKB-KW"/>
</dbReference>
<dbReference type="GO" id="GO:1902017">
    <property type="term" value="P:regulation of cilium assembly"/>
    <property type="evidence" value="ECO:0000266"/>
    <property type="project" value="RGD"/>
</dbReference>
<dbReference type="FunFam" id="1.20.5.340:FF:000028">
    <property type="entry name" value="rab GTPase-binding effector protein 2 isoform X1"/>
    <property type="match status" value="1"/>
</dbReference>
<dbReference type="FunFam" id="1.20.5.730:FF:000003">
    <property type="entry name" value="rab GTPase-binding effector protein 2 isoform X1"/>
    <property type="match status" value="1"/>
</dbReference>
<dbReference type="Gene3D" id="1.20.5.340">
    <property type="match status" value="1"/>
</dbReference>
<dbReference type="Gene3D" id="1.20.5.730">
    <property type="entry name" value="Single helix bin"/>
    <property type="match status" value="1"/>
</dbReference>
<dbReference type="InterPro" id="IPR003914">
    <property type="entry name" value="Rabaptin"/>
</dbReference>
<dbReference type="InterPro" id="IPR018514">
    <property type="entry name" value="Rabaptin_coiled-coil"/>
</dbReference>
<dbReference type="InterPro" id="IPR015390">
    <property type="entry name" value="Rabaptin_Rab5-bd_dom"/>
</dbReference>
<dbReference type="PANTHER" id="PTHR31179">
    <property type="entry name" value="RAB GTPASE-BINDING EFFECTOR PROTEIN"/>
    <property type="match status" value="1"/>
</dbReference>
<dbReference type="PANTHER" id="PTHR31179:SF6">
    <property type="entry name" value="RAB GTPASE-BINDING EFFECTOR PROTEIN 2"/>
    <property type="match status" value="1"/>
</dbReference>
<dbReference type="Pfam" id="PF09311">
    <property type="entry name" value="Rab5-bind"/>
    <property type="match status" value="2"/>
</dbReference>
<dbReference type="Pfam" id="PF03528">
    <property type="entry name" value="Rabaptin"/>
    <property type="match status" value="1"/>
</dbReference>
<dbReference type="PRINTS" id="PR01432">
    <property type="entry name" value="RABAPTIN"/>
</dbReference>
<dbReference type="SUPFAM" id="SSF103652">
    <property type="entry name" value="G protein-binding domain"/>
    <property type="match status" value="2"/>
</dbReference>
<proteinExistence type="evidence at protein level"/>
<name>RABE2_RAT</name>
<protein>
    <recommendedName>
        <fullName>Rab GTPase-binding effector protein 2</fullName>
    </recommendedName>
    <alternativeName>
        <fullName>MP13 protein</fullName>
    </alternativeName>
    <alternativeName>
        <fullName>Rabaptin-5beta</fullName>
    </alternativeName>
</protein>
<reference key="1">
    <citation type="journal article" date="2000" name="Neurosci. Lett.">
        <title>Cloning and expression of MP13 gene from rat hippocampus, a new factor related to guanosine triphosphate regulation.</title>
        <authorList>
            <person name="Feng Z."/>
            <person name="Hong J."/>
            <person name="Qi Q."/>
            <person name="Han Y."/>
            <person name="Wilson B."/>
            <person name="Iadarola M."/>
            <person name="Tiao N."/>
            <person name="Bing G."/>
        </authorList>
    </citation>
    <scope>NUCLEOTIDE SEQUENCE [MRNA]</scope>
    <source>
        <strain>Fischer 344</strain>
        <tissue>Hippocampus</tissue>
    </source>
</reference>
<reference key="2">
    <citation type="journal article" date="2012" name="Nat. Commun.">
        <title>Quantitative maps of protein phosphorylation sites across 14 different rat organs and tissues.</title>
        <authorList>
            <person name="Lundby A."/>
            <person name="Secher A."/>
            <person name="Lage K."/>
            <person name="Nordsborg N.B."/>
            <person name="Dmytriyev A."/>
            <person name="Lundby C."/>
            <person name="Olsen J.V."/>
        </authorList>
    </citation>
    <scope>PHOSPHORYLATION [LARGE SCALE ANALYSIS] AT SER-176 AND SER-180</scope>
    <scope>IDENTIFICATION BY MASS SPECTROMETRY [LARGE SCALE ANALYSIS]</scope>
</reference>
<organism>
    <name type="scientific">Rattus norvegicus</name>
    <name type="common">Rat</name>
    <dbReference type="NCBI Taxonomy" id="10116"/>
    <lineage>
        <taxon>Eukaryota</taxon>
        <taxon>Metazoa</taxon>
        <taxon>Chordata</taxon>
        <taxon>Craniata</taxon>
        <taxon>Vertebrata</taxon>
        <taxon>Euteleostomi</taxon>
        <taxon>Mammalia</taxon>
        <taxon>Eutheria</taxon>
        <taxon>Euarchontoglires</taxon>
        <taxon>Glires</taxon>
        <taxon>Rodentia</taxon>
        <taxon>Myomorpha</taxon>
        <taxon>Muroidea</taxon>
        <taxon>Muridae</taxon>
        <taxon>Murinae</taxon>
        <taxon>Rattus</taxon>
    </lineage>
</organism>
<keyword id="KW-0966">Cell projection</keyword>
<keyword id="KW-0970">Cilium biogenesis/degradation</keyword>
<keyword id="KW-0175">Coiled coil</keyword>
<keyword id="KW-0963">Cytoplasm</keyword>
<keyword id="KW-0206">Cytoskeleton</keyword>
<keyword id="KW-0254">Endocytosis</keyword>
<keyword id="KW-0967">Endosome</keyword>
<keyword id="KW-0597">Phosphoprotein</keyword>
<keyword id="KW-0653">Protein transport</keyword>
<keyword id="KW-1185">Reference proteome</keyword>
<keyword id="KW-0813">Transport</keyword>
<comment type="function">
    <text evidence="1">Plays a role in membrane trafficking and in homotypic early endosome fusion. Participates in arteriogenesis by regulating vascular endothelial growth factor receptor 2/VEGFR2 cell surface expression and endosomal trafficking. By interacting with SDCCAG8, localizes to centrosomes and plays a critical role in ciliogenesis.</text>
</comment>
<comment type="subunit">
    <text evidence="1">Heterodimer with RABGEF1. The dimer binds RAB5A that has been activated by GTP-binding. Interacts with SDCCAG8; this interaction is important for ciliogenesis regulation. Interacts with RAB4A; this interaction may mediate VEGFR2 cell surface expression.</text>
</comment>
<comment type="subcellular location">
    <subcellularLocation>
        <location evidence="1">Cytoplasm</location>
    </subcellularLocation>
    <subcellularLocation>
        <location evidence="1">Early endosome</location>
    </subcellularLocation>
    <subcellularLocation>
        <location evidence="1">Cytoplasm</location>
        <location evidence="1">Cytoskeleton</location>
        <location evidence="1">Microtubule organizing center</location>
        <location evidence="1">Centrosome</location>
    </subcellularLocation>
    <subcellularLocation>
        <location evidence="1">Cytoplasm</location>
        <location evidence="1">Cytoskeleton</location>
        <location evidence="1">Cilium basal body</location>
    </subcellularLocation>
</comment>
<comment type="similarity">
    <text evidence="4">Belongs to the rabaptin family.</text>
</comment>
<gene>
    <name type="primary">Rabep2</name>
    <name type="synonym">Rabpt5b</name>
</gene>
<feature type="chain" id="PRO_0000187561" description="Rab GTPase-binding effector protein 2">
    <location>
        <begin position="1"/>
        <end position="554"/>
    </location>
</feature>
<feature type="region of interest" description="Disordered" evidence="3">
    <location>
        <begin position="1"/>
        <end position="29"/>
    </location>
</feature>
<feature type="region of interest" description="Disordered" evidence="3">
    <location>
        <begin position="167"/>
        <end position="250"/>
    </location>
</feature>
<feature type="region of interest" description="Disordered" evidence="3">
    <location>
        <begin position="375"/>
        <end position="395"/>
    </location>
</feature>
<feature type="coiled-coil region" evidence="2">
    <location>
        <begin position="15"/>
        <end position="173"/>
    </location>
</feature>
<feature type="coiled-coil region" evidence="2">
    <location>
        <begin position="274"/>
        <end position="512"/>
    </location>
</feature>
<feature type="compositionally biased region" description="Low complexity" evidence="3">
    <location>
        <begin position="1"/>
        <end position="15"/>
    </location>
</feature>
<feature type="compositionally biased region" description="Basic and acidic residues" evidence="3">
    <location>
        <begin position="16"/>
        <end position="29"/>
    </location>
</feature>
<feature type="compositionally biased region" description="Polar residues" evidence="3">
    <location>
        <begin position="377"/>
        <end position="386"/>
    </location>
</feature>
<feature type="modified residue" description="Phosphoserine" evidence="5">
    <location>
        <position position="176"/>
    </location>
</feature>
<feature type="modified residue" description="Phosphoserine" evidence="5">
    <location>
        <position position="180"/>
    </location>
</feature>
<feature type="modified residue" description="Phosphoserine" evidence="1">
    <location>
        <position position="187"/>
    </location>
</feature>
<feature type="modified residue" description="Phosphoserine" evidence="1">
    <location>
        <position position="191"/>
    </location>
</feature>
<accession>Q62835</accession>
<sequence length="554" mass="61973">MAAAPAALALDPQPQEEQKDASESSELSRLRAELAGALAEMETMKAVAEVSESTKAEAVAAVQRQCQEEVASLQAILKDSISSYETQIAALKQERQQQQQDSEEKERELGHLKQLLARAHPLDSLEKQMEKAHEDSEKLREIVLPMEQEIAELKVKLLRAEELIQEIQRRPRQPASLHGSTELLPLSRNPSPPLEPSEEPSGDAGPAAEAFAHNCDDSASISSFSLGGAAGSVSLRGPQGLSPEQEETASLVSTGTLVPEGIYLPPPGYQLVPDSQWEQLQVEGRQLQKELESVRRERDELQEGLSRSNEDCAKQMQVLLAQVQNSEQLLRTLQGTVSQAQERVQRQMAELATSHKCLSQEVKRLNEENRGLRAEQLPSSALQGSEQQEDQDEALPSSIQELHQLVRHTRQQARARQQAQEHEAERLRIEIVKLREALDEETAAKASLEGQLRVQREETDVLEASLCSLRIETERVQQEHHKAQLTDLLSEQRAKALRLQAELETSEQVQRDFVRLSQALQVRLEQIRQADTLEQVRSILDEAPLRDIKDIKDS</sequence>